<keyword id="KW-0998">Cell outer membrane</keyword>
<keyword id="KW-0961">Cell wall biogenesis/degradation</keyword>
<keyword id="KW-0449">Lipoprotein</keyword>
<keyword id="KW-0456">Lyase</keyword>
<keyword id="KW-0472">Membrane</keyword>
<keyword id="KW-0564">Palmitate</keyword>
<keyword id="KW-0732">Signal</keyword>
<organism>
    <name type="scientific">Escherichia coli (strain K12 / MC4100 / BW2952)</name>
    <dbReference type="NCBI Taxonomy" id="595496"/>
    <lineage>
        <taxon>Bacteria</taxon>
        <taxon>Pseudomonadati</taxon>
        <taxon>Pseudomonadota</taxon>
        <taxon>Gammaproteobacteria</taxon>
        <taxon>Enterobacterales</taxon>
        <taxon>Enterobacteriaceae</taxon>
        <taxon>Escherichia</taxon>
    </lineage>
</organism>
<gene>
    <name evidence="1" type="primary">emtA</name>
    <name type="ordered locus">BWG_1018</name>
</gene>
<reference key="1">
    <citation type="journal article" date="2009" name="J. Bacteriol.">
        <title>Genomic sequencing reveals regulatory mutations and recombinational events in the widely used MC4100 lineage of Escherichia coli K-12.</title>
        <authorList>
            <person name="Ferenci T."/>
            <person name="Zhou Z."/>
            <person name="Betteridge T."/>
            <person name="Ren Y."/>
            <person name="Liu Y."/>
            <person name="Feng L."/>
            <person name="Reeves P.R."/>
            <person name="Wang L."/>
        </authorList>
    </citation>
    <scope>NUCLEOTIDE SEQUENCE [LARGE SCALE GENOMIC DNA]</scope>
    <source>
        <strain>K12 / MC4100 / BW2952</strain>
    </source>
</reference>
<proteinExistence type="inferred from homology"/>
<comment type="function">
    <text evidence="1">Murein-degrading enzyme. May play a role in recycling of muropeptides during cell elongation and/or cell division. Preferentially cleaves at a distance of more than two disaccharide units from the ends of the glycan chain.</text>
</comment>
<comment type="catalytic activity">
    <reaction evidence="1">
        <text>Endolytic cleavage of the (1-&gt;4)-beta-glycosidic linkage between N-acetylmuramic acid (MurNAc) and N-acetylglucosamine (GlcNAc) residues in peptidoglycan with concomitant formation of a 1,6-anhydrobond in the MurNAc residue.</text>
        <dbReference type="EC" id="4.2.2.n2"/>
    </reaction>
</comment>
<comment type="subcellular location">
    <subcellularLocation>
        <location evidence="1">Cell outer membrane</location>
        <topology evidence="1">Lipid-anchor</topology>
    </subcellularLocation>
</comment>
<comment type="similarity">
    <text evidence="1">Belongs to the transglycosylase Slt family.</text>
</comment>
<sequence>MKLRWFAFLIVLLAGCSSKHDYTNPPWNAKVPVQRAMQWMPISQKAGAAWGVDPQLITAIIAIESGGNPNAVSKSNAIGLMQLKASTSGRDVYRRMGWSGEPTTSELKNPERNISMGAAYLNILETGPLAGIEDPKVLQYALVVSYANGAGALLRTFSSDRKKAISKINDLDADEFLEHVARNHPAPQAPRYIYKLEQALDAM</sequence>
<accession>C4ZTN4</accession>
<evidence type="ECO:0000255" key="1">
    <source>
        <dbReference type="HAMAP-Rule" id="MF_01381"/>
    </source>
</evidence>
<protein>
    <recommendedName>
        <fullName evidence="1">Endo-type membrane-bound lytic murein transglycosylase A</fullName>
        <ecNumber evidence="1">4.2.2.n2</ecNumber>
    </recommendedName>
    <alternativeName>
        <fullName evidence="1">Peptidoglycan lytic endotransglycosylase</fullName>
    </alternativeName>
</protein>
<dbReference type="EC" id="4.2.2.n2" evidence="1"/>
<dbReference type="EMBL" id="CP001396">
    <property type="protein sequence ID" value="ACR63697.1"/>
    <property type="molecule type" value="Genomic_DNA"/>
</dbReference>
<dbReference type="RefSeq" id="WP_001301104.1">
    <property type="nucleotide sequence ID" value="NC_012759.1"/>
</dbReference>
<dbReference type="SMR" id="C4ZTN4"/>
<dbReference type="CAZy" id="GH23">
    <property type="family name" value="Glycoside Hydrolase Family 23"/>
</dbReference>
<dbReference type="GeneID" id="93776239"/>
<dbReference type="KEGG" id="ebw:BWG_1018"/>
<dbReference type="HOGENOM" id="CLU_103257_0_0_6"/>
<dbReference type="GO" id="GO:0009279">
    <property type="term" value="C:cell outer membrane"/>
    <property type="evidence" value="ECO:0007669"/>
    <property type="project" value="UniProtKB-SubCell"/>
</dbReference>
<dbReference type="GO" id="GO:0008932">
    <property type="term" value="F:lytic endotransglycosylase activity"/>
    <property type="evidence" value="ECO:0007669"/>
    <property type="project" value="InterPro"/>
</dbReference>
<dbReference type="GO" id="GO:0016998">
    <property type="term" value="P:cell wall macromolecule catabolic process"/>
    <property type="evidence" value="ECO:0007669"/>
    <property type="project" value="UniProtKB-UniRule"/>
</dbReference>
<dbReference type="GO" id="GO:0071555">
    <property type="term" value="P:cell wall organization"/>
    <property type="evidence" value="ECO:0007669"/>
    <property type="project" value="UniProtKB-KW"/>
</dbReference>
<dbReference type="GO" id="GO:0000270">
    <property type="term" value="P:peptidoglycan metabolic process"/>
    <property type="evidence" value="ECO:0007669"/>
    <property type="project" value="InterPro"/>
</dbReference>
<dbReference type="CDD" id="cd16893">
    <property type="entry name" value="LT_MltC_MltE"/>
    <property type="match status" value="1"/>
</dbReference>
<dbReference type="FunFam" id="1.10.530.10:FF:000007">
    <property type="entry name" value="Endo-type membrane-bound lytic murein transglycosylase A"/>
    <property type="match status" value="1"/>
</dbReference>
<dbReference type="Gene3D" id="1.10.530.10">
    <property type="match status" value="1"/>
</dbReference>
<dbReference type="HAMAP" id="MF_01381">
    <property type="entry name" value="EmtA"/>
    <property type="match status" value="1"/>
</dbReference>
<dbReference type="InterPro" id="IPR023946">
    <property type="entry name" value="EmtA"/>
</dbReference>
<dbReference type="InterPro" id="IPR023346">
    <property type="entry name" value="Lysozyme-like_dom_sf"/>
</dbReference>
<dbReference type="InterPro" id="IPR000189">
    <property type="entry name" value="Transglyc_AS"/>
</dbReference>
<dbReference type="InterPro" id="IPR008258">
    <property type="entry name" value="Transglycosylase_SLT_dom_1"/>
</dbReference>
<dbReference type="NCBIfam" id="NF012014">
    <property type="entry name" value="PRK15470.1"/>
    <property type="match status" value="1"/>
</dbReference>
<dbReference type="PANTHER" id="PTHR37423:SF4">
    <property type="entry name" value="ENDO-TYPE MEMBRANE-BOUND LYTIC MUREIN TRANSGLYCOSYLASE A"/>
    <property type="match status" value="1"/>
</dbReference>
<dbReference type="PANTHER" id="PTHR37423">
    <property type="entry name" value="SOLUBLE LYTIC MUREIN TRANSGLYCOSYLASE-RELATED"/>
    <property type="match status" value="1"/>
</dbReference>
<dbReference type="Pfam" id="PF01464">
    <property type="entry name" value="SLT"/>
    <property type="match status" value="1"/>
</dbReference>
<dbReference type="SUPFAM" id="SSF53955">
    <property type="entry name" value="Lysozyme-like"/>
    <property type="match status" value="1"/>
</dbReference>
<dbReference type="PROSITE" id="PS51257">
    <property type="entry name" value="PROKAR_LIPOPROTEIN"/>
    <property type="match status" value="1"/>
</dbReference>
<dbReference type="PROSITE" id="PS00922">
    <property type="entry name" value="TRANSGLYCOSYLASE"/>
    <property type="match status" value="1"/>
</dbReference>
<feature type="signal peptide" evidence="1">
    <location>
        <begin position="1"/>
        <end position="15"/>
    </location>
</feature>
<feature type="chain" id="PRO_1000215098" description="Endo-type membrane-bound lytic murein transglycosylase A">
    <location>
        <begin position="16"/>
        <end position="203"/>
    </location>
</feature>
<feature type="lipid moiety-binding region" description="N-palmitoyl cysteine" evidence="1">
    <location>
        <position position="16"/>
    </location>
</feature>
<feature type="lipid moiety-binding region" description="S-diacylglycerol cysteine" evidence="1">
    <location>
        <position position="16"/>
    </location>
</feature>
<name>EMTA_ECOBW</name>